<gene>
    <name type="ordered locus">MJ0124</name>
</gene>
<reference key="1">
    <citation type="journal article" date="1996" name="Science">
        <title>Complete genome sequence of the methanogenic archaeon, Methanococcus jannaschii.</title>
        <authorList>
            <person name="Bult C.J."/>
            <person name="White O."/>
            <person name="Olsen G.J."/>
            <person name="Zhou L."/>
            <person name="Fleischmann R.D."/>
            <person name="Sutton G.G."/>
            <person name="Blake J.A."/>
            <person name="FitzGerald L.M."/>
            <person name="Clayton R.A."/>
            <person name="Gocayne J.D."/>
            <person name="Kerlavage A.R."/>
            <person name="Dougherty B.A."/>
            <person name="Tomb J.-F."/>
            <person name="Adams M.D."/>
            <person name="Reich C.I."/>
            <person name="Overbeek R."/>
            <person name="Kirkness E.F."/>
            <person name="Weinstock K.G."/>
            <person name="Merrick J.M."/>
            <person name="Glodek A."/>
            <person name="Scott J.L."/>
            <person name="Geoghagen N.S.M."/>
            <person name="Weidman J.F."/>
            <person name="Fuhrmann J.L."/>
            <person name="Nguyen D."/>
            <person name="Utterback T.R."/>
            <person name="Kelley J.M."/>
            <person name="Peterson J.D."/>
            <person name="Sadow P.W."/>
            <person name="Hanna M.C."/>
            <person name="Cotton M.D."/>
            <person name="Roberts K.M."/>
            <person name="Hurst M.A."/>
            <person name="Kaine B.P."/>
            <person name="Borodovsky M."/>
            <person name="Klenk H.-P."/>
            <person name="Fraser C.M."/>
            <person name="Smith H.O."/>
            <person name="Woese C.R."/>
            <person name="Venter J.C."/>
        </authorList>
    </citation>
    <scope>NUCLEOTIDE SEQUENCE [LARGE SCALE GENOMIC DNA]</scope>
    <source>
        <strain>ATCC 43067 / DSM 2661 / JAL-1 / JCM 10045 / NBRC 100440</strain>
    </source>
</reference>
<reference key="2">
    <citation type="journal article" date="2003" name="Nucleic Acids Res.">
        <title>A nomenclature for restriction enzymes, DNA methyltransferases, homing endonucleases and their genes.</title>
        <authorList>
            <person name="Roberts R.J."/>
            <person name="Belfort M."/>
            <person name="Bestor T."/>
            <person name="Bhagwat A.S."/>
            <person name="Bickle T.A."/>
            <person name="Bitinaite J."/>
            <person name="Blumenthal R.M."/>
            <person name="Degtyarev S.K."/>
            <person name="Dryden D.T."/>
            <person name="Dybvig K."/>
            <person name="Firman K."/>
            <person name="Gromova E.S."/>
            <person name="Gumport R.I."/>
            <person name="Halford S.E."/>
            <person name="Hattman S."/>
            <person name="Heitman J."/>
            <person name="Hornby D.P."/>
            <person name="Janulaitis A."/>
            <person name="Jeltsch A."/>
            <person name="Josephsen J."/>
            <person name="Kiss A."/>
            <person name="Klaenhammer T.R."/>
            <person name="Kobayashi I."/>
            <person name="Kong H."/>
            <person name="Krueger D.H."/>
            <person name="Lacks S."/>
            <person name="Marinus M.G."/>
            <person name="Miyahara M."/>
            <person name="Morgan R.D."/>
            <person name="Murray N.E."/>
            <person name="Nagaraja V."/>
            <person name="Piekarowicz A."/>
            <person name="Pingoud A."/>
            <person name="Raleigh E."/>
            <person name="Rao D.N."/>
            <person name="Reich N."/>
            <person name="Repin V.E."/>
            <person name="Selker E.U."/>
            <person name="Shaw P.C."/>
            <person name="Stein D.C."/>
            <person name="Stoddard B.L."/>
            <person name="Szybalski W."/>
            <person name="Trautner T.A."/>
            <person name="Van Etten J.L."/>
            <person name="Vitor J.M."/>
            <person name="Wilson G.G."/>
            <person name="Xu S.Y."/>
        </authorList>
    </citation>
    <scope>NOMENCLATURE</scope>
</reference>
<name>T1R1_METJA</name>
<accession>Q57588</accession>
<protein>
    <recommendedName>
        <fullName evidence="2">Putative type I restriction enzyme MjaVIIP endonuclease subunit</fullName>
        <shortName evidence="2">MjaVIIP</shortName>
        <shortName evidence="3">R protein</shortName>
        <ecNumber evidence="1">3.1.21.3</ecNumber>
    </recommendedName>
</protein>
<proteinExistence type="inferred from homology"/>
<sequence>MDYLKYGIEVVVKKSEKRKFKLIDYKNIDKNTFFYLCEAEFKGNPKNSRPDITLFINGIPVVIIEAKATLKIDSHLEGISQIRRYEKFSPDLFRFVQFAISYGEEQLYTPTMPNWYKENIHLPAYYWRIRQKINGKKVVKDDIFYILNPSILLEIIRYFIFYRKDEYSKTKTLSKIIARYNQYFATKKAMKRIDEYLSGDSKNKGLIWHWQGSGKTYTMFFIANYFLDKYFSENPVIFFVVDRVDLERQSKEFYEAIQEKKFKTILKRIDSINKLYEVIKSIKMSELSNKVIVRGIYTTTIQKFQYERSKKEKDNNKEKDKDDEDLDLSKPIEEIIKKIEDKLKKEEKEGKIKGLKDLLIILAFIYLKHLKEKNPEEYKKHIENLKKLKDKDKKEEYLINLGNIKRKHILILIDEAHRTQYGILGGMRKITFPNAITFGFTGTPVFKNEKNTFTEFSYPEKGEFYLDVYFIGDSIKDKFTLPLTYQIVKEGDIKSEGIQITLDEEDIKEFIDEWIKRGEDINLFDRKKLPKYINKSKTILLNPKRIDKVAKYIVDRIEEDTENFKFKAMVVAVNRLGCVRFKKALDKYLKEKFGDEAEKWAEVVMTYHHNEEEKEIIEYMKKLKKERNSNDFNEINQIIREEFLNSENPKILIVTDMLLTGFDAPRLKVMYLDKPLYGHRLLQAIARTNRPYPDKEFGLIVDSVGLFKVLTETMALYNMLAEEEIREDFKNNLISSIDEIFQEFKLKLEMVKESLKNLKINDEDLSIDVNTLKTLTKNKDFNNNELKEKLDLIAFYAEDGKNARILKLIDDLKAVIKLYKALGSYPQKIFYIEDIELLSFIYAYLIKKLKPKKKSNRKFWEELISFIHNKMLVDDLTVIEEINLNPDDLDKILKENIGKREIKRAVANYYFILKNSILDKQHDPIYKEILERLERLRRDWIMKRIDDKIYLNAIKNLMELKNNYDKKIKGKSSIERIKESISTYIGENILKDQDIKLNLENTEKLITKMQNLNKLSKLQRKKFKKELSCALLEDLLKELKGKIKDEDAKKVAELSDNLVSEFILKEIWGENYENQ</sequence>
<feature type="chain" id="PRO_0000106704" description="Putative type I restriction enzyme MjaVIIP endonuclease subunit">
    <location>
        <begin position="1"/>
        <end position="1075"/>
    </location>
</feature>
<evidence type="ECO:0000250" key="1">
    <source>
        <dbReference type="UniProtKB" id="P08956"/>
    </source>
</evidence>
<evidence type="ECO:0000303" key="2">
    <source>
    </source>
</evidence>
<evidence type="ECO:0000305" key="3"/>
<keyword id="KW-0067">ATP-binding</keyword>
<keyword id="KW-0238">DNA-binding</keyword>
<keyword id="KW-0255">Endonuclease</keyword>
<keyword id="KW-0347">Helicase</keyword>
<keyword id="KW-0378">Hydrolase</keyword>
<keyword id="KW-0540">Nuclease</keyword>
<keyword id="KW-0547">Nucleotide-binding</keyword>
<keyword id="KW-1185">Reference proteome</keyword>
<keyword id="KW-0680">Restriction system</keyword>
<dbReference type="EC" id="3.1.21.3" evidence="1"/>
<dbReference type="EMBL" id="L77117">
    <property type="protein sequence ID" value="AAB98104.1"/>
    <property type="molecule type" value="Genomic_DNA"/>
</dbReference>
<dbReference type="STRING" id="243232.MJ_0124"/>
<dbReference type="REBASE" id="154995">
    <property type="entry name" value="VscVS12ORF1031P"/>
</dbReference>
<dbReference type="REBASE" id="191862">
    <property type="entry name" value="Apa1447ORF2453P"/>
</dbReference>
<dbReference type="REBASE" id="191891">
    <property type="entry name" value="Apa1468ORF2715P"/>
</dbReference>
<dbReference type="REBASE" id="203827">
    <property type="entry name" value="Bli141ORF4598P"/>
</dbReference>
<dbReference type="REBASE" id="203830">
    <property type="entry name" value="Bli27ORF807P"/>
</dbReference>
<dbReference type="REBASE" id="3900">
    <property type="entry name" value="MjaVIIP"/>
</dbReference>
<dbReference type="PaxDb" id="243232-MJ_0124"/>
<dbReference type="EnsemblBacteria" id="AAB98104">
    <property type="protein sequence ID" value="AAB98104"/>
    <property type="gene ID" value="MJ_0124"/>
</dbReference>
<dbReference type="KEGG" id="mja:MJ_0124"/>
<dbReference type="eggNOG" id="arCOG00878">
    <property type="taxonomic scope" value="Archaea"/>
</dbReference>
<dbReference type="HOGENOM" id="CLU_005762_0_0_2"/>
<dbReference type="InParanoid" id="Q57588"/>
<dbReference type="PhylomeDB" id="Q57588"/>
<dbReference type="Proteomes" id="UP000000805">
    <property type="component" value="Chromosome"/>
</dbReference>
<dbReference type="GO" id="GO:0005524">
    <property type="term" value="F:ATP binding"/>
    <property type="evidence" value="ECO:0007669"/>
    <property type="project" value="UniProtKB-KW"/>
</dbReference>
<dbReference type="GO" id="GO:0003677">
    <property type="term" value="F:DNA binding"/>
    <property type="evidence" value="ECO:0007669"/>
    <property type="project" value="UniProtKB-KW"/>
</dbReference>
<dbReference type="GO" id="GO:0004386">
    <property type="term" value="F:helicase activity"/>
    <property type="evidence" value="ECO:0007669"/>
    <property type="project" value="UniProtKB-KW"/>
</dbReference>
<dbReference type="GO" id="GO:0009035">
    <property type="term" value="F:type I site-specific deoxyribonuclease activity"/>
    <property type="evidence" value="ECO:0007669"/>
    <property type="project" value="InterPro"/>
</dbReference>
<dbReference type="GO" id="GO:0009307">
    <property type="term" value="P:DNA restriction-modification system"/>
    <property type="evidence" value="ECO:0007669"/>
    <property type="project" value="UniProtKB-KW"/>
</dbReference>
<dbReference type="CDD" id="cd22332">
    <property type="entry name" value="HsdR_N"/>
    <property type="match status" value="1"/>
</dbReference>
<dbReference type="CDD" id="cd18800">
    <property type="entry name" value="SF2_C_EcoR124I-like"/>
    <property type="match status" value="1"/>
</dbReference>
<dbReference type="Gene3D" id="3.90.1570.50">
    <property type="match status" value="1"/>
</dbReference>
<dbReference type="Gene3D" id="3.40.50.300">
    <property type="entry name" value="P-loop containing nucleotide triphosphate hydrolases"/>
    <property type="match status" value="3"/>
</dbReference>
<dbReference type="InterPro" id="IPR014001">
    <property type="entry name" value="Helicase_ATP-bd"/>
</dbReference>
<dbReference type="InterPro" id="IPR055180">
    <property type="entry name" value="HsdR_RecA-like_helicase_dom_2"/>
</dbReference>
<dbReference type="InterPro" id="IPR027417">
    <property type="entry name" value="P-loop_NTPase"/>
</dbReference>
<dbReference type="InterPro" id="IPR007409">
    <property type="entry name" value="Restrct_endonuc_type1_HsdR_N"/>
</dbReference>
<dbReference type="InterPro" id="IPR004473">
    <property type="entry name" value="Restrct_endonuc_typeI_HsdR"/>
</dbReference>
<dbReference type="InterPro" id="IPR040980">
    <property type="entry name" value="SWI2_SNF2"/>
</dbReference>
<dbReference type="InterPro" id="IPR051268">
    <property type="entry name" value="Type-I_R_enzyme_R_subunit"/>
</dbReference>
<dbReference type="NCBIfam" id="TIGR00348">
    <property type="entry name" value="hsdR"/>
    <property type="match status" value="1"/>
</dbReference>
<dbReference type="PANTHER" id="PTHR30195:SF15">
    <property type="entry name" value="TYPE I RESTRICTION ENZYME HINDI ENDONUCLEASE SUBUNIT"/>
    <property type="match status" value="1"/>
</dbReference>
<dbReference type="PANTHER" id="PTHR30195">
    <property type="entry name" value="TYPE I SITE-SPECIFIC DEOXYRIBONUCLEASE PROTEIN SUBUNIT M AND R"/>
    <property type="match status" value="1"/>
</dbReference>
<dbReference type="Pfam" id="PF04313">
    <property type="entry name" value="HSDR_N"/>
    <property type="match status" value="1"/>
</dbReference>
<dbReference type="Pfam" id="PF18766">
    <property type="entry name" value="SWI2_SNF2"/>
    <property type="match status" value="2"/>
</dbReference>
<dbReference type="Pfam" id="PF22679">
    <property type="entry name" value="T1R_D3-like"/>
    <property type="match status" value="1"/>
</dbReference>
<dbReference type="SMART" id="SM00487">
    <property type="entry name" value="DEXDc"/>
    <property type="match status" value="1"/>
</dbReference>
<dbReference type="SUPFAM" id="SSF52540">
    <property type="entry name" value="P-loop containing nucleoside triphosphate hydrolases"/>
    <property type="match status" value="2"/>
</dbReference>
<organism>
    <name type="scientific">Methanocaldococcus jannaschii (strain ATCC 43067 / DSM 2661 / JAL-1 / JCM 10045 / NBRC 100440)</name>
    <name type="common">Methanococcus jannaschii</name>
    <dbReference type="NCBI Taxonomy" id="243232"/>
    <lineage>
        <taxon>Archaea</taxon>
        <taxon>Methanobacteriati</taxon>
        <taxon>Methanobacteriota</taxon>
        <taxon>Methanomada group</taxon>
        <taxon>Methanococci</taxon>
        <taxon>Methanococcales</taxon>
        <taxon>Methanocaldococcaceae</taxon>
        <taxon>Methanocaldococcus</taxon>
    </lineage>
</organism>
<comment type="function">
    <text evidence="1 2">The restriction (R) subunit of a type I restriction enzyme that recognizes 5'-CAAN(7)TGG-3' and cleaves a random distance away. The R subunit is required for both endonuclease and ATPase activities but not for modification. After locating a non-methylated recognition site, the enzyme complex serves as a molecular motor that translocates DNA in an ATP-dependent manner until a collision occurs that triggers cleavage.</text>
</comment>
<comment type="catalytic activity">
    <reaction evidence="1">
        <text>Endonucleolytic cleavage of DNA to give random double-stranded fragments with terminal 5'-phosphates, ATP is simultaneously hydrolyzed.</text>
        <dbReference type="EC" id="3.1.21.3"/>
    </reaction>
</comment>
<comment type="subunit">
    <text evidence="1">The type I restriction/modification system is composed of three polypeptides R, M and S.</text>
</comment>
<comment type="miscellaneous">
    <text evidence="1">Type I restriction and modification enzymes are complex, multifunctional systems which require ATP, S-adenosyl methionine and magnesium as cofactors and, in addition to their endonucleolytic and methylase activities, are potent DNA-dependent ATPases.</text>
</comment>
<comment type="similarity">
    <text evidence="3">Belongs to the HsdR family.</text>
</comment>